<sequence length="350" mass="37594">MAFKIASSPHLSRSFQTSSLMQRVILCALPGVAVQCFFFGWGTVIQALLAMSVALLSEAVVLKLRARNVTDTLRDNSALLTGLLIGIAIPPLAPWWVTVIGTLFAIVIVKQLYGGLGHNIFNPAMAAYVMLLISFPVQMTSWVAPSVIASQPVDFIHSLQMIFTGASSSEINAYKLGFDGISMATPLDTIKTDLAMGLTTTESLSKAIFSDGFGVGWFWVNLAYLAGGLVMLKLKVIRWHITAGILAALFICSGVGYLLNPDTFTGPLLHLFSGATMLAAFFIATDPVTAATSVRGRLVFGALIGILVYIIRTFGGYPDAFAFAILLANLCAPFIDHYMKPRAYGHRSAT</sequence>
<comment type="function">
    <text evidence="1">Part of a membrane-bound complex that couples electron transfer with translocation of ions across the membrane.</text>
</comment>
<comment type="cofactor">
    <cofactor evidence="1">
        <name>FMN</name>
        <dbReference type="ChEBI" id="CHEBI:58210"/>
    </cofactor>
</comment>
<comment type="subunit">
    <text evidence="1">The complex is composed of six subunits: RnfA, RnfB, RnfC, RnfD, RnfE and RnfG.</text>
</comment>
<comment type="subcellular location">
    <subcellularLocation>
        <location evidence="1">Cell inner membrane</location>
        <topology evidence="1">Multi-pass membrane protein</topology>
    </subcellularLocation>
</comment>
<comment type="similarity">
    <text evidence="1">Belongs to the NqrB/RnfD family.</text>
</comment>
<dbReference type="EC" id="7.-.-.-" evidence="1"/>
<dbReference type="EMBL" id="CP000821">
    <property type="protein sequence ID" value="ABV36650.1"/>
    <property type="molecule type" value="Genomic_DNA"/>
</dbReference>
<dbReference type="RefSeq" id="WP_012142385.1">
    <property type="nucleotide sequence ID" value="NC_009831.1"/>
</dbReference>
<dbReference type="SMR" id="A8FUX7"/>
<dbReference type="STRING" id="425104.Ssed_2041"/>
<dbReference type="KEGG" id="sse:Ssed_2041"/>
<dbReference type="eggNOG" id="COG4658">
    <property type="taxonomic scope" value="Bacteria"/>
</dbReference>
<dbReference type="HOGENOM" id="CLU_042020_0_0_6"/>
<dbReference type="OrthoDB" id="9776359at2"/>
<dbReference type="Proteomes" id="UP000002015">
    <property type="component" value="Chromosome"/>
</dbReference>
<dbReference type="GO" id="GO:0005886">
    <property type="term" value="C:plasma membrane"/>
    <property type="evidence" value="ECO:0007669"/>
    <property type="project" value="UniProtKB-SubCell"/>
</dbReference>
<dbReference type="GO" id="GO:0022900">
    <property type="term" value="P:electron transport chain"/>
    <property type="evidence" value="ECO:0007669"/>
    <property type="project" value="UniProtKB-UniRule"/>
</dbReference>
<dbReference type="GO" id="GO:0055085">
    <property type="term" value="P:transmembrane transport"/>
    <property type="evidence" value="ECO:0007669"/>
    <property type="project" value="InterPro"/>
</dbReference>
<dbReference type="HAMAP" id="MF_00462">
    <property type="entry name" value="RsxD_RnfD"/>
    <property type="match status" value="1"/>
</dbReference>
<dbReference type="InterPro" id="IPR004338">
    <property type="entry name" value="NqrB/RnfD"/>
</dbReference>
<dbReference type="InterPro" id="IPR011303">
    <property type="entry name" value="RnfD_bac"/>
</dbReference>
<dbReference type="NCBIfam" id="NF002011">
    <property type="entry name" value="PRK00816.1"/>
    <property type="match status" value="1"/>
</dbReference>
<dbReference type="NCBIfam" id="TIGR01946">
    <property type="entry name" value="rnfD"/>
    <property type="match status" value="1"/>
</dbReference>
<dbReference type="PANTHER" id="PTHR30578">
    <property type="entry name" value="ELECTRON TRANSPORT COMPLEX PROTEIN RNFD"/>
    <property type="match status" value="1"/>
</dbReference>
<dbReference type="PANTHER" id="PTHR30578:SF0">
    <property type="entry name" value="ION-TRANSLOCATING OXIDOREDUCTASE COMPLEX SUBUNIT D"/>
    <property type="match status" value="1"/>
</dbReference>
<dbReference type="Pfam" id="PF03116">
    <property type="entry name" value="NQR2_RnfD_RnfE"/>
    <property type="match status" value="1"/>
</dbReference>
<evidence type="ECO:0000255" key="1">
    <source>
        <dbReference type="HAMAP-Rule" id="MF_00462"/>
    </source>
</evidence>
<name>RNFD_SHESH</name>
<keyword id="KW-0997">Cell inner membrane</keyword>
<keyword id="KW-1003">Cell membrane</keyword>
<keyword id="KW-0249">Electron transport</keyword>
<keyword id="KW-0285">Flavoprotein</keyword>
<keyword id="KW-0288">FMN</keyword>
<keyword id="KW-0472">Membrane</keyword>
<keyword id="KW-0597">Phosphoprotein</keyword>
<keyword id="KW-1185">Reference proteome</keyword>
<keyword id="KW-1278">Translocase</keyword>
<keyword id="KW-0812">Transmembrane</keyword>
<keyword id="KW-1133">Transmembrane helix</keyword>
<keyword id="KW-0813">Transport</keyword>
<protein>
    <recommendedName>
        <fullName evidence="1">Ion-translocating oxidoreductase complex subunit D</fullName>
        <ecNumber evidence="1">7.-.-.-</ecNumber>
    </recommendedName>
    <alternativeName>
        <fullName evidence="1">Rnf electron transport complex subunit D</fullName>
    </alternativeName>
</protein>
<feature type="chain" id="PRO_1000081158" description="Ion-translocating oxidoreductase complex subunit D">
    <location>
        <begin position="1"/>
        <end position="350"/>
    </location>
</feature>
<feature type="transmembrane region" description="Helical" evidence="1">
    <location>
        <begin position="25"/>
        <end position="45"/>
    </location>
</feature>
<feature type="transmembrane region" description="Helical" evidence="1">
    <location>
        <begin position="89"/>
        <end position="109"/>
    </location>
</feature>
<feature type="transmembrane region" description="Helical" evidence="1">
    <location>
        <begin position="129"/>
        <end position="149"/>
    </location>
</feature>
<feature type="transmembrane region" description="Helical" evidence="1">
    <location>
        <begin position="212"/>
        <end position="232"/>
    </location>
</feature>
<feature type="transmembrane region" description="Helical" evidence="1">
    <location>
        <begin position="239"/>
        <end position="259"/>
    </location>
</feature>
<feature type="transmembrane region" description="Helical" evidence="1">
    <location>
        <begin position="264"/>
        <end position="284"/>
    </location>
</feature>
<feature type="transmembrane region" description="Helical" evidence="1">
    <location>
        <begin position="298"/>
        <end position="318"/>
    </location>
</feature>
<feature type="transmembrane region" description="Helical" evidence="1">
    <location>
        <begin position="319"/>
        <end position="339"/>
    </location>
</feature>
<feature type="modified residue" description="FMN phosphoryl threonine" evidence="1">
    <location>
        <position position="185"/>
    </location>
</feature>
<accession>A8FUX7</accession>
<proteinExistence type="inferred from homology"/>
<organism>
    <name type="scientific">Shewanella sediminis (strain HAW-EB3)</name>
    <dbReference type="NCBI Taxonomy" id="425104"/>
    <lineage>
        <taxon>Bacteria</taxon>
        <taxon>Pseudomonadati</taxon>
        <taxon>Pseudomonadota</taxon>
        <taxon>Gammaproteobacteria</taxon>
        <taxon>Alteromonadales</taxon>
        <taxon>Shewanellaceae</taxon>
        <taxon>Shewanella</taxon>
    </lineage>
</organism>
<gene>
    <name evidence="1" type="primary">rnfD</name>
    <name type="ordered locus">Ssed_2041</name>
</gene>
<reference key="1">
    <citation type="submission" date="2007-08" db="EMBL/GenBank/DDBJ databases">
        <title>Complete sequence of Shewanella sediminis HAW-EB3.</title>
        <authorList>
            <consortium name="US DOE Joint Genome Institute"/>
            <person name="Copeland A."/>
            <person name="Lucas S."/>
            <person name="Lapidus A."/>
            <person name="Barry K."/>
            <person name="Glavina del Rio T."/>
            <person name="Dalin E."/>
            <person name="Tice H."/>
            <person name="Pitluck S."/>
            <person name="Chertkov O."/>
            <person name="Brettin T."/>
            <person name="Bruce D."/>
            <person name="Detter J.C."/>
            <person name="Han C."/>
            <person name="Schmutz J."/>
            <person name="Larimer F."/>
            <person name="Land M."/>
            <person name="Hauser L."/>
            <person name="Kyrpides N."/>
            <person name="Kim E."/>
            <person name="Zhao J.-S."/>
            <person name="Richardson P."/>
        </authorList>
    </citation>
    <scope>NUCLEOTIDE SEQUENCE [LARGE SCALE GENOMIC DNA]</scope>
    <source>
        <strain>HAW-EB3</strain>
    </source>
</reference>